<evidence type="ECO:0000250" key="1">
    <source>
        <dbReference type="UniProtKB" id="L0E2Z4"/>
    </source>
</evidence>
<evidence type="ECO:0000250" key="2">
    <source>
        <dbReference type="UniProtKB" id="O93868"/>
    </source>
</evidence>
<evidence type="ECO:0000256" key="3">
    <source>
        <dbReference type="SAM" id="MobiDB-lite"/>
    </source>
</evidence>
<evidence type="ECO:0000269" key="4">
    <source>
    </source>
</evidence>
<evidence type="ECO:0000269" key="5">
    <source>
    </source>
</evidence>
<evidence type="ECO:0000269" key="6">
    <source>
    </source>
</evidence>
<evidence type="ECO:0000269" key="7">
    <source>
    </source>
</evidence>
<evidence type="ECO:0000269" key="8">
    <source>
    </source>
</evidence>
<evidence type="ECO:0000269" key="9">
    <source>
    </source>
</evidence>
<evidence type="ECO:0000269" key="10">
    <source>
    </source>
</evidence>
<evidence type="ECO:0000269" key="11">
    <source>
    </source>
</evidence>
<evidence type="ECO:0000269" key="12">
    <source>
    </source>
</evidence>
<evidence type="ECO:0000269" key="13">
    <source>
    </source>
</evidence>
<evidence type="ECO:0000303" key="14">
    <source>
    </source>
</evidence>
<evidence type="ECO:0000303" key="15">
    <source>
    </source>
</evidence>
<evidence type="ECO:0000303" key="16">
    <source>
    </source>
</evidence>
<evidence type="ECO:0000305" key="17"/>
<evidence type="ECO:0000305" key="18">
    <source>
    </source>
</evidence>
<evidence type="ECO:0000305" key="19">
    <source>
    </source>
</evidence>
<feature type="chain" id="PRO_0000054736" description="Norsolorinic acid ketoreductase">
    <location>
        <begin position="1"/>
        <end position="271"/>
    </location>
</feature>
<feature type="region of interest" description="Disordered" evidence="3">
    <location>
        <begin position="1"/>
        <end position="22"/>
    </location>
</feature>
<feature type="active site" description="Proton donor" evidence="2">
    <location>
        <position position="185"/>
    </location>
</feature>
<feature type="active site" description="Lowers pKa of active site Tyr" evidence="2">
    <location>
        <position position="189"/>
    </location>
</feature>
<feature type="binding site" evidence="1">
    <location>
        <position position="36"/>
    </location>
    <ligand>
        <name>NADP(+)</name>
        <dbReference type="ChEBI" id="CHEBI:58349"/>
    </ligand>
</feature>
<feature type="binding site" evidence="2">
    <location>
        <position position="112"/>
    </location>
    <ligand>
        <name>NADP(+)</name>
        <dbReference type="ChEBI" id="CHEBI:58349"/>
    </ligand>
</feature>
<feature type="binding site" evidence="2">
    <location>
        <position position="185"/>
    </location>
    <ligand>
        <name>NADP(+)</name>
        <dbReference type="ChEBI" id="CHEBI:58349"/>
    </ligand>
</feature>
<feature type="binding site" evidence="2">
    <location>
        <position position="189"/>
    </location>
    <ligand>
        <name>NADP(+)</name>
        <dbReference type="ChEBI" id="CHEBI:58349"/>
    </ligand>
</feature>
<feature type="binding site" evidence="2">
    <location>
        <position position="216"/>
    </location>
    <ligand>
        <name>NADP(+)</name>
        <dbReference type="ChEBI" id="CHEBI:58349"/>
    </ligand>
</feature>
<feature type="binding site" evidence="1">
    <location>
        <position position="218"/>
    </location>
    <ligand>
        <name>NADP(+)</name>
        <dbReference type="ChEBI" id="CHEBI:58349"/>
    </ligand>
</feature>
<accession>Q00278</accession>
<accession>A0A0F0I0S7</accession>
<accession>Q6UEH1</accession>
<gene>
    <name evidence="15" type="primary">aflD</name>
    <name evidence="16" type="synonym">nor-1</name>
    <name type="ORF">P875_00052988</name>
</gene>
<protein>
    <recommendedName>
        <fullName evidence="14">Norsolorinic acid ketoreductase</fullName>
        <ecNumber evidence="4">1.1.1.349</ecNumber>
    </recommendedName>
    <alternativeName>
        <fullName evidence="17">Aflatoxin biosynthesis ketoreductase nor-1</fullName>
    </alternativeName>
    <alternativeName>
        <fullName evidence="15">Aflatoxin biosynthesis protein D</fullName>
    </alternativeName>
    <alternativeName>
        <fullName evidence="17">Short chain dehydrogenase aflD</fullName>
    </alternativeName>
</protein>
<organism>
    <name type="scientific">Aspergillus parasiticus (strain ATCC 56775 / NRRL 5862 / SRRC 143 / SU-1)</name>
    <dbReference type="NCBI Taxonomy" id="1403190"/>
    <lineage>
        <taxon>Eukaryota</taxon>
        <taxon>Fungi</taxon>
        <taxon>Dikarya</taxon>
        <taxon>Ascomycota</taxon>
        <taxon>Pezizomycotina</taxon>
        <taxon>Eurotiomycetes</taxon>
        <taxon>Eurotiomycetidae</taxon>
        <taxon>Eurotiales</taxon>
        <taxon>Aspergillaceae</taxon>
        <taxon>Aspergillus</taxon>
        <taxon>Aspergillus subgen. Circumdati</taxon>
    </lineage>
</organism>
<comment type="function">
    <text evidence="4 9 13 18 19">Norsolorinic acid ketoreductase; part of the gene cluster that mediates the biosynthesis of aflatoxins, a group of polyketide-derived furanocoumarins, and part of the most toxic and carcinogenic compounds among the known mycotoxins (PubMed:15006741, PubMed:15094053, PubMed:7993094). The four major aflatoxins produced by A.parasiticus are aflatoxin B1 (AFB1), aflatoxin B2 (AFB2), aflatoxin G1 (AFG1) and aflatoxin G2 (AFG2) (PubMed:15006741). Within the aflatoxin pathway, the norsolorinic acid ketoreductase aflD performs the second step by catalyzing the dehydration of norsolorinic acid (NOR) to form (1'S)-averantin (AVN) (PubMed:10584035, PubMed:19217941). The biosynthesis of aflatoxins begins with the norsolorinic acid synthase aflC that combines a hexanoyl starter unit produced by the fatty acid synthase aflA/aflB and 7 malonyl-CoA extender units to synthesize the precursor NOR. The second step is the conversion of NOR to averantin and requires the norsolorinic acid ketoreductase aflD, which catalyzes the dehydration of norsolorinic acid to form (1'S)-averantin. The norsolorinic acid reductases aflE and aflF may also play a role in the conversion of NOR to AVN. The cytochrome P450 monooxygenase aflG then catalyzes the hydroxylation of AVN to 5'hydroxyaverantin (HAVN). The next step is performed by the 5'-hydroxyaverantin dehydrogenase aflH that transforms HAVN to 5'-oxoaverantin (OAVN) which is further converted to averufin (AVF) by aflK that plays a dual role in the pathway, as a 5'-oxoaverantin cyclase that mediates conversion of 5'-oxoaverantin, as well as a versicolorin B synthase in a later step in the pathway. The averufin oxidase aflI catalyzes the conversion of AVF to versiconal hemiacetal acetate (VHA). VHA is then the substrate for the versiconal hemiacetal acetate esterase aflJ to yield versiconal (VAL). Versicolorin B synthase aflK then converts VAL to versicolorin B (VERB) by closing the bisfuran ring of aflatoxin which is required for DNA-binding, thus giving to aflatoxin its activity as a mutagen. Then, the activity of the versicolorin B desaturase aflL leads to versicolorin A (VERA). A branch point starts from VERB since it can also be converted to dihydrodemethylsterigmatocystin (DMDHST), probably also by aflL, VERA being a precursor for aflatoxins B1 and G1, and DMDHST for aflatoxins B2 and G2. Next, the versicolorin reductase aflM and the cytochrome P450 monooxygenase aflN are involved in conversion of VERA to demethylsterigmatocystin (DMST). AflX and aflY seem also involved in this step, through probable aflX-mediated epoxide ring-opening step following versicolorin A oxidation and aflY-mediated Baeyer-Villiger oxidation required for the formation of the xanthone ring. The methyltransferase aflO then leads to the modification of DMST to sterigmatocystin (ST), and of DMDHST to dihydrosterigmatocystin (DHST). Both ST and DHST are then substrates of the O-methyltransferase aflP to yield O-methylsterigmatocystin (OMST) and dihydro-O-methylsterigmatocystin (DHOMST), respectively. Finally OMST is converted to aflatoxins B1 and G1, and DHOMST to aflatoxins B2 and G2, via the action of several enzymes including O-methylsterigmatocystin oxidoreductase aflQ, the cytochrome P450 monooxygenase aflU, but also the NADH-dependent flavin oxidoreductase nadA which is specifically required for the synthesis of AFG1 (PubMed:15006741).</text>
</comment>
<comment type="catalytic activity">
    <reaction evidence="4">
        <text>(1'S)-averantin + NADP(+) = norsolorinic acid + NADPH + H(+)</text>
        <dbReference type="Rhea" id="RHEA:35447"/>
        <dbReference type="ChEBI" id="CHEBI:15378"/>
        <dbReference type="ChEBI" id="CHEBI:57783"/>
        <dbReference type="ChEBI" id="CHEBI:58349"/>
        <dbReference type="ChEBI" id="CHEBI:71533"/>
        <dbReference type="ChEBI" id="CHEBI:77899"/>
        <dbReference type="EC" id="1.1.1.349"/>
    </reaction>
    <physiologicalReaction direction="right-to-left" evidence="4">
        <dbReference type="Rhea" id="RHEA:35449"/>
    </physiologicalReaction>
</comment>
<comment type="pathway">
    <text evidence="7 18">Mycotoxin biosynthesis; aflatoxin biosynthesis.</text>
</comment>
<comment type="subcellular location">
    <subcellularLocation>
        <location evidence="5 9">Cytoplasm</location>
        <location evidence="5 9">Cytosol</location>
    </subcellularLocation>
    <subcellularLocation>
        <location evidence="9">Vacuole</location>
    </subcellularLocation>
</comment>
<comment type="induction">
    <text evidence="6 8 10 11 12">Expression is stimulated by gluscoe (PubMed:15054098). The promoter contains a CRE1 element (5'-TGACATAA-3') required for cAMP-mediated stimulation of expression (PubMed:15054098). Expression is also positively regulated by the cluster-specific transcription factor aflR that binds to an AFLR1 element (5'-TCGGCCAGCGA-3') (PubMed:15054098, PubMed:15746358). The promoter also contains an aflD-specific element called NorL (residues -210 to -238) and required for full transcription (PubMed:15746358). Natural plant compounds carvacrol (CR) and trans-cinnamaldehyde (TC) strongly reduce the expression (PubMed:26217023). Zataria multiflora essential oil reduces gene expression (PubMed:24294264). Expression is also repressed by curcumin (PubMed:23113196).</text>
</comment>
<comment type="disruption phenotype">
    <text evidence="13">Leads to accumulation of norsolorinic acid and a substantial reduced production of aflatoxin AFB1 (PubMed:7993094).</text>
</comment>
<comment type="similarity">
    <text evidence="17">Belongs to the short-chain dehydrogenases/reductases (SDR) family.</text>
</comment>
<comment type="sequence caution" evidence="17">
    <conflict type="erroneous gene model prediction">
        <sequence resource="EMBL-CDS" id="KJK60791"/>
    </conflict>
</comment>
<proteinExistence type="evidence at protein level"/>
<keyword id="KW-0963">Cytoplasm</keyword>
<keyword id="KW-0521">NADP</keyword>
<keyword id="KW-0560">Oxidoreductase</keyword>
<keyword id="KW-1185">Reference proteome</keyword>
<keyword id="KW-0926">Vacuole</keyword>
<dbReference type="EC" id="1.1.1.349" evidence="4"/>
<dbReference type="EMBL" id="L27801">
    <property type="protein sequence ID" value="AAA58798.1"/>
    <property type="molecule type" value="Genomic_DNA"/>
</dbReference>
<dbReference type="EMBL" id="AY371490">
    <property type="protein sequence ID" value="AAS66005.1"/>
    <property type="molecule type" value="Genomic_DNA"/>
</dbReference>
<dbReference type="EMBL" id="JZEE01000728">
    <property type="protein sequence ID" value="KJK60791.1"/>
    <property type="status" value="ALT_SEQ"/>
    <property type="molecule type" value="Genomic_DNA"/>
</dbReference>
<dbReference type="SMR" id="Q00278"/>
<dbReference type="STRING" id="1403190.Q00278"/>
<dbReference type="KEGG" id="ag:AAA58798"/>
<dbReference type="OrthoDB" id="9876299at2759"/>
<dbReference type="BioCyc" id="MetaCyc:MONOMER-14027"/>
<dbReference type="BRENDA" id="1.1.1.349">
    <property type="organism ID" value="523"/>
</dbReference>
<dbReference type="BRENDA" id="1.1.1.B25">
    <property type="organism ID" value="523"/>
</dbReference>
<dbReference type="UniPathway" id="UPA00287"/>
<dbReference type="Proteomes" id="UP000033540">
    <property type="component" value="Unassembled WGS sequence"/>
</dbReference>
<dbReference type="GO" id="GO:0005829">
    <property type="term" value="C:cytosol"/>
    <property type="evidence" value="ECO:0007669"/>
    <property type="project" value="UniProtKB-SubCell"/>
</dbReference>
<dbReference type="GO" id="GO:0005775">
    <property type="term" value="C:vacuolar lumen"/>
    <property type="evidence" value="ECO:0000314"/>
    <property type="project" value="UniProt"/>
</dbReference>
<dbReference type="GO" id="GO:0140393">
    <property type="term" value="F:norsolorinic acid ketoreductase activity"/>
    <property type="evidence" value="ECO:0000314"/>
    <property type="project" value="UniProt"/>
</dbReference>
<dbReference type="GO" id="GO:0016616">
    <property type="term" value="F:oxidoreductase activity, acting on the CH-OH group of donors, NAD or NADP as acceptor"/>
    <property type="evidence" value="ECO:0000314"/>
    <property type="project" value="UniProtKB"/>
</dbReference>
<dbReference type="GO" id="GO:0045122">
    <property type="term" value="P:aflatoxin biosynthetic process"/>
    <property type="evidence" value="ECO:0000314"/>
    <property type="project" value="UniProtKB"/>
</dbReference>
<dbReference type="CDD" id="cd05325">
    <property type="entry name" value="carb_red_sniffer_like_SDR_c"/>
    <property type="match status" value="1"/>
</dbReference>
<dbReference type="Gene3D" id="3.40.50.720">
    <property type="entry name" value="NAD(P)-binding Rossmann-like Domain"/>
    <property type="match status" value="1"/>
</dbReference>
<dbReference type="InterPro" id="IPR051468">
    <property type="entry name" value="Fungal_SecMetab_SDRs"/>
</dbReference>
<dbReference type="InterPro" id="IPR036291">
    <property type="entry name" value="NAD(P)-bd_dom_sf"/>
</dbReference>
<dbReference type="InterPro" id="IPR002347">
    <property type="entry name" value="SDR_fam"/>
</dbReference>
<dbReference type="PANTHER" id="PTHR43544:SF7">
    <property type="entry name" value="NADB-LER2"/>
    <property type="match status" value="1"/>
</dbReference>
<dbReference type="PANTHER" id="PTHR43544">
    <property type="entry name" value="SHORT-CHAIN DEHYDROGENASE/REDUCTASE"/>
    <property type="match status" value="1"/>
</dbReference>
<dbReference type="Pfam" id="PF00106">
    <property type="entry name" value="adh_short"/>
    <property type="match status" value="1"/>
</dbReference>
<dbReference type="PRINTS" id="PR00081">
    <property type="entry name" value="GDHRDH"/>
</dbReference>
<dbReference type="SUPFAM" id="SSF51735">
    <property type="entry name" value="NAD(P)-binding Rossmann-fold domains"/>
    <property type="match status" value="1"/>
</dbReference>
<reference key="1">
    <citation type="journal article" date="1994" name="Appl. Environ. Microbiol.">
        <title>Structural and functional analysis of the nor-1 gene involved in the biosynthesis of aflatoxins by Aspergillus parasiticus.</title>
        <authorList>
            <person name="Trail F."/>
            <person name="Chang P.-K."/>
            <person name="Cary J."/>
            <person name="Linz J.E."/>
        </authorList>
    </citation>
    <scope>NUCLEOTIDE SEQUENCE [GENOMIC DNA]</scope>
    <scope>DISRUPTION PHENOTYPE</scope>
    <scope>FUNCTION</scope>
    <source>
        <strain>ATCC 56775 / NRRL 5862 / SRRC 143 / SU-1</strain>
    </source>
</reference>
<reference key="2">
    <citation type="journal article" date="2004" name="FEBS Lett.">
        <title>Completed sequence of aflatoxin pathway gene cluster in Aspergillus parasiticus.</title>
        <authorList>
            <person name="Yu J."/>
            <person name="Bhatnagar D."/>
            <person name="Cleveland T.E."/>
        </authorList>
    </citation>
    <scope>NUCLEOTIDE SEQUENCE [GENOMIC DNA]</scope>
    <scope>FUNCTION</scope>
    <scope>PATHWAY</scope>
    <source>
        <strain>ATCC 56775 / NRRL 5862 / SRRC 143 / SU-1</strain>
    </source>
</reference>
<reference key="3">
    <citation type="submission" date="2015-02" db="EMBL/GenBank/DDBJ databases">
        <title>Draft genome sequence of Aspergillus parasiticus SU-1.</title>
        <authorList>
            <person name="Yu J."/>
            <person name="Fedorova N."/>
            <person name="Yin Y."/>
            <person name="Losada L."/>
            <person name="Zafar N."/>
            <person name="Taujale R."/>
            <person name="Ehrlich K.C."/>
            <person name="Bhatnagar D."/>
            <person name="Cleveland T.E."/>
            <person name="Bennett J.W."/>
            <person name="Nierman W.C."/>
        </authorList>
    </citation>
    <scope>NUCLEOTIDE SEQUENCE [LARGE SCALE GENOMIC DNA]</scope>
    <source>
        <strain>ATCC 56775 / NRRL 5862 / SRRC 143 / SU-1</strain>
    </source>
</reference>
<reference key="4">
    <citation type="journal article" date="1999" name="Appl. Environ. Microbiol.">
        <title>Enzymatic function of the nor-1 protein in aflatoxin biosynthesis in Aspergillus parasiticus.</title>
        <authorList>
            <person name="Zhou R."/>
            <person name="Linz J.E."/>
        </authorList>
    </citation>
    <scope>FUNCTION</scope>
    <scope>CATALYTIC ACTIVITY</scope>
</reference>
<reference key="5">
    <citation type="journal article" date="2004" name="Appl. Environ. Microbiol.">
        <title>Clustered pathway genes in aflatoxin biosynthesis.</title>
        <authorList>
            <person name="Yu J."/>
            <person name="Chang P.K."/>
            <person name="Ehrlich K.C."/>
            <person name="Cary J.W."/>
            <person name="Bhatnagar D."/>
            <person name="Cleveland T.E."/>
            <person name="Payne G.A."/>
            <person name="Linz J.E."/>
            <person name="Woloshuk C.P."/>
            <person name="Bennett J.W."/>
        </authorList>
    </citation>
    <scope>FUNCTION</scope>
    <scope>PATHWAY</scope>
    <scope>NOMENCLATURE</scope>
</reference>
<reference key="6">
    <citation type="journal article" date="2004" name="Arch. Microbiol.">
        <title>Subcellular localization of aflatoxin biosynthetic enzymes Nor-1, Ver-1, and OmtA in time-dependent fractionated colonies of Aspergillus parasiticus.</title>
        <authorList>
            <person name="Lee L.W."/>
            <person name="Chiou C.H."/>
            <person name="Klomparens K.L."/>
            <person name="Cary J.W."/>
            <person name="Linz J.E."/>
        </authorList>
    </citation>
    <scope>SUBCELLULAR LOCATION</scope>
</reference>
<reference key="7">
    <citation type="journal article" date="2004" name="J. Biol. Chem.">
        <title>A novel cAMP-response element, CRE1, modulates expression of nor-1 in Aspergillus parasiticus.</title>
        <authorList>
            <person name="Roze L.V."/>
            <person name="Miller M.J."/>
            <person name="Rarick M."/>
            <person name="Mahanti N."/>
            <person name="Linz J.E."/>
        </authorList>
    </citation>
    <scope>INDUCTION</scope>
</reference>
<reference key="8">
    <citation type="journal article" date="2005" name="Appl. Environ. Microbiol.">
        <title>Role of cis-acting sites NorL, a TATA box, and AflR1 in nor-1 transcriptional activation in Aspergillus parasiticus.</title>
        <authorList>
            <person name="Miller M.J."/>
            <person name="Roze L.V."/>
            <person name="Trail F."/>
            <person name="Linz J.E."/>
        </authorList>
    </citation>
    <scope>INDUCTION</scope>
</reference>
<reference key="9">
    <citation type="journal article" date="2009" name="Mycol. Res.">
        <title>Functional expression and sub-cellular localization of the early aflatoxin pathway enzyme Nor-1 in Aspergillus parasiticus.</title>
        <authorList>
            <person name="Hong S.Y."/>
            <person name="Linz J.E."/>
        </authorList>
    </citation>
    <scope>FUNCTION</scope>
    <scope>SUBCELLULAR LOCATION</scope>
</reference>
<reference key="10">
    <citation type="journal article" date="2011" name="Toxins">
        <title>Control of aflatoxin production of Aspergillus flavus and Aspergillus parasiticus using RNA silencing technology by targeting aflD (nor-1) gene.</title>
        <authorList>
            <person name="Abdel-Hadi A.M."/>
            <person name="Caley D.P."/>
            <person name="Carter D.R."/>
            <person name="Magan N."/>
        </authorList>
    </citation>
    <scope>DISRUPTION PHENOTYPE</scope>
</reference>
<reference key="11">
    <citation type="journal article" date="2012" name="Iran. J. Public Health">
        <title>Effect of curcumin on Aspergillus parasiticus growth and expression of major genes involved in the early and late stages of aflatoxin biosynthesis.</title>
        <authorList>
            <person name="Jahanshiri Z."/>
            <person name="Shams-Ghahfarokhi M."/>
            <person name="Allameh A."/>
            <person name="Razzaghi-Abyaneh M."/>
        </authorList>
    </citation>
    <scope>INDUCTION</scope>
</reference>
<reference key="12">
    <citation type="journal article" date="2013" name="Braz. J. Microbiol.">
        <title>The potential effects of Zataria multiflora Boiss essential oil on growth, aflatoxin production and transcription of aflatoxin biosynthesis pathway genes of toxigenic Aspergillus parasiticus.</title>
        <authorList>
            <person name="Yahyaraeyat R."/>
            <person name="Khosravi A.R."/>
            <person name="Shahbazzadeh D."/>
            <person name="Khalaj V."/>
        </authorList>
    </citation>
    <scope>INDUCTION</scope>
</reference>
<reference key="13">
    <citation type="journal article" date="2015" name="Poult. Sci.">
        <title>Controlling Aspergillus flavus and Aspergillus parasiticus growth and aflatoxin production in poultry feed using carvacrol and trans-cinnamaldehyde.</title>
        <authorList>
            <person name="Yin H.B."/>
            <person name="Chen C.H."/>
            <person name="Kollanoor-Johny A."/>
            <person name="Darre M.J."/>
            <person name="Venkitanarayanan K."/>
        </authorList>
    </citation>
    <scope>INDUCTION</scope>
</reference>
<name>AFLD_ASPPU</name>
<sequence length="271" mass="29569">MNGSLSQHDQERLSTPYRDGPPEETVYLVTGASRGIGRGLIEAFLQRPKSTVVAWLRNVRTATPALSALTVAEGSRMIIVQLNSDSETDAQAAVQTLREEHGVTHLDVVVANAAMATNFGPASTMPLEHLQAHMMVNMYAPVLLFQATRLMLQQSKQQAKFVLIGAPISTITNMHDYSRAPLTAYGVSKLAANYMVRKFHFENKWLTAFIIDPGHVQTDMGDQGARLMGRPQAPTTVADSVAGICARIDEATKETTSGHFVIHTDGSQLPW</sequence>